<evidence type="ECO:0000255" key="1">
    <source>
        <dbReference type="HAMAP-Rule" id="MF_00230"/>
    </source>
</evidence>
<accession>A5UQS8</accession>
<name>COBT_ROSS1</name>
<feature type="chain" id="PRO_1000021622" description="Nicotinate-nucleotide--dimethylbenzimidazole phosphoribosyltransferase">
    <location>
        <begin position="1"/>
        <end position="353"/>
    </location>
</feature>
<feature type="active site" description="Proton acceptor" evidence="1">
    <location>
        <position position="318"/>
    </location>
</feature>
<comment type="function">
    <text evidence="1">Catalyzes the synthesis of alpha-ribazole-5'-phosphate from nicotinate mononucleotide (NAMN) and 5,6-dimethylbenzimidazole (DMB).</text>
</comment>
<comment type="catalytic activity">
    <reaction evidence="1">
        <text>5,6-dimethylbenzimidazole + nicotinate beta-D-ribonucleotide = alpha-ribazole 5'-phosphate + nicotinate + H(+)</text>
        <dbReference type="Rhea" id="RHEA:11196"/>
        <dbReference type="ChEBI" id="CHEBI:15378"/>
        <dbReference type="ChEBI" id="CHEBI:15890"/>
        <dbReference type="ChEBI" id="CHEBI:32544"/>
        <dbReference type="ChEBI" id="CHEBI:57502"/>
        <dbReference type="ChEBI" id="CHEBI:57918"/>
        <dbReference type="EC" id="2.4.2.21"/>
    </reaction>
</comment>
<comment type="pathway">
    <text evidence="1">Nucleoside biosynthesis; alpha-ribazole biosynthesis; alpha-ribazole from 5,6-dimethylbenzimidazole: step 1/2.</text>
</comment>
<comment type="similarity">
    <text evidence="1">Belongs to the CobT family.</text>
</comment>
<gene>
    <name evidence="1" type="primary">cobT</name>
    <name type="ordered locus">RoseRS_0559</name>
</gene>
<sequence>MSLLSETIARIGPLDDAAAAAAQARQDVLTKPQGALGRLEALSVQIAGITGNQRPRLTNPAVIVMAADHGVARRGVSAYPSEVTAQMVLNFLNGGAAINVLARHVGARVIVVDMGVAANLPSHPELINRKMGMGTADFSVEPAMSRTQAQQAVEAGIACANDAIDAGVDILATGDMGIGNTTASSAVVAAITGRPVADVTGRGAGVDDAGLARKIAVIEQALALHRPDPNDGLDVLAKVGGFEIGGLAGVMLGAAARRVPVVIDGFISGAAALIAWTLAPAVQPYLIAAHRSVERGHEAVFTRLDLVPLFDLGMRLGEGTGAVLGMSLCQAACKILDEMATFGEAGVSGKVEN</sequence>
<keyword id="KW-0169">Cobalamin biosynthesis</keyword>
<keyword id="KW-0328">Glycosyltransferase</keyword>
<keyword id="KW-0808">Transferase</keyword>
<organism>
    <name type="scientific">Roseiflexus sp. (strain RS-1)</name>
    <dbReference type="NCBI Taxonomy" id="357808"/>
    <lineage>
        <taxon>Bacteria</taxon>
        <taxon>Bacillati</taxon>
        <taxon>Chloroflexota</taxon>
        <taxon>Chloroflexia</taxon>
        <taxon>Chloroflexales</taxon>
        <taxon>Roseiflexineae</taxon>
        <taxon>Roseiflexaceae</taxon>
        <taxon>Roseiflexus</taxon>
    </lineage>
</organism>
<protein>
    <recommendedName>
        <fullName evidence="1">Nicotinate-nucleotide--dimethylbenzimidazole phosphoribosyltransferase</fullName>
        <shortName evidence="1">NN:DBI PRT</shortName>
        <ecNumber evidence="1">2.4.2.21</ecNumber>
    </recommendedName>
    <alternativeName>
        <fullName evidence="1">N(1)-alpha-phosphoribosyltransferase</fullName>
    </alternativeName>
</protein>
<proteinExistence type="inferred from homology"/>
<reference key="1">
    <citation type="submission" date="2007-04" db="EMBL/GenBank/DDBJ databases">
        <title>Complete sequence of Roseiflexus sp. RS-1.</title>
        <authorList>
            <consortium name="US DOE Joint Genome Institute"/>
            <person name="Copeland A."/>
            <person name="Lucas S."/>
            <person name="Lapidus A."/>
            <person name="Barry K."/>
            <person name="Detter J.C."/>
            <person name="Glavina del Rio T."/>
            <person name="Hammon N."/>
            <person name="Israni S."/>
            <person name="Dalin E."/>
            <person name="Tice H."/>
            <person name="Pitluck S."/>
            <person name="Chertkov O."/>
            <person name="Brettin T."/>
            <person name="Bruce D."/>
            <person name="Han C."/>
            <person name="Schmutz J."/>
            <person name="Larimer F."/>
            <person name="Land M."/>
            <person name="Hauser L."/>
            <person name="Kyrpides N."/>
            <person name="Mikhailova N."/>
            <person name="Bryant D.A."/>
            <person name="Richardson P."/>
        </authorList>
    </citation>
    <scope>NUCLEOTIDE SEQUENCE [LARGE SCALE GENOMIC DNA]</scope>
    <source>
        <strain>RS-1</strain>
    </source>
</reference>
<dbReference type="EC" id="2.4.2.21" evidence="1"/>
<dbReference type="EMBL" id="CP000686">
    <property type="protein sequence ID" value="ABQ88981.1"/>
    <property type="molecule type" value="Genomic_DNA"/>
</dbReference>
<dbReference type="RefSeq" id="WP_011955337.1">
    <property type="nucleotide sequence ID" value="NC_009523.1"/>
</dbReference>
<dbReference type="SMR" id="A5UQS8"/>
<dbReference type="STRING" id="357808.RoseRS_0559"/>
<dbReference type="KEGG" id="rrs:RoseRS_0559"/>
<dbReference type="eggNOG" id="COG2038">
    <property type="taxonomic scope" value="Bacteria"/>
</dbReference>
<dbReference type="HOGENOM" id="CLU_002982_0_0_0"/>
<dbReference type="OrthoDB" id="9781491at2"/>
<dbReference type="UniPathway" id="UPA00061">
    <property type="reaction ID" value="UER00516"/>
</dbReference>
<dbReference type="Proteomes" id="UP000006554">
    <property type="component" value="Chromosome"/>
</dbReference>
<dbReference type="GO" id="GO:0008939">
    <property type="term" value="F:nicotinate-nucleotide-dimethylbenzimidazole phosphoribosyltransferase activity"/>
    <property type="evidence" value="ECO:0007669"/>
    <property type="project" value="UniProtKB-UniRule"/>
</dbReference>
<dbReference type="GO" id="GO:0009236">
    <property type="term" value="P:cobalamin biosynthetic process"/>
    <property type="evidence" value="ECO:0007669"/>
    <property type="project" value="UniProtKB-KW"/>
</dbReference>
<dbReference type="CDD" id="cd02439">
    <property type="entry name" value="DMB-PRT_CobT"/>
    <property type="match status" value="1"/>
</dbReference>
<dbReference type="FunFam" id="3.40.50.10210:FF:000001">
    <property type="entry name" value="Nicotinate-nucleotide--dimethylbenzimidazole phosphoribosyltransferase"/>
    <property type="match status" value="1"/>
</dbReference>
<dbReference type="Gene3D" id="1.10.1610.10">
    <property type="match status" value="1"/>
</dbReference>
<dbReference type="Gene3D" id="3.40.50.10210">
    <property type="match status" value="1"/>
</dbReference>
<dbReference type="HAMAP" id="MF_00230">
    <property type="entry name" value="CobT"/>
    <property type="match status" value="1"/>
</dbReference>
<dbReference type="InterPro" id="IPR003200">
    <property type="entry name" value="Nict_dMeBzImd_PRibTrfase"/>
</dbReference>
<dbReference type="InterPro" id="IPR017846">
    <property type="entry name" value="Nict_dMeBzImd_PRibTrfase_bact"/>
</dbReference>
<dbReference type="InterPro" id="IPR023195">
    <property type="entry name" value="Nict_dMeBzImd_PRibTrfase_N"/>
</dbReference>
<dbReference type="InterPro" id="IPR036087">
    <property type="entry name" value="Nict_dMeBzImd_PRibTrfase_sf"/>
</dbReference>
<dbReference type="NCBIfam" id="TIGR03160">
    <property type="entry name" value="cobT_DBIPRT"/>
    <property type="match status" value="1"/>
</dbReference>
<dbReference type="NCBIfam" id="NF000996">
    <property type="entry name" value="PRK00105.1"/>
    <property type="match status" value="1"/>
</dbReference>
<dbReference type="PANTHER" id="PTHR43463">
    <property type="entry name" value="NICOTINATE-NUCLEOTIDE--DIMETHYLBENZIMIDAZOLE PHOSPHORIBOSYLTRANSFERASE"/>
    <property type="match status" value="1"/>
</dbReference>
<dbReference type="PANTHER" id="PTHR43463:SF1">
    <property type="entry name" value="NICOTINATE-NUCLEOTIDE--DIMETHYLBENZIMIDAZOLE PHOSPHORIBOSYLTRANSFERASE"/>
    <property type="match status" value="1"/>
</dbReference>
<dbReference type="Pfam" id="PF02277">
    <property type="entry name" value="DBI_PRT"/>
    <property type="match status" value="1"/>
</dbReference>
<dbReference type="SUPFAM" id="SSF52733">
    <property type="entry name" value="Nicotinate mononucleotide:5,6-dimethylbenzimidazole phosphoribosyltransferase (CobT)"/>
    <property type="match status" value="1"/>
</dbReference>